<proteinExistence type="evidence at protein level"/>
<protein>
    <recommendedName>
        <fullName>Neutrophil gelatinase-associated lipocalin</fullName>
        <shortName>NGAL</shortName>
    </recommendedName>
    <alternativeName>
        <fullName evidence="8">Alpha-2-microglobulin-related protein</fullName>
    </alternativeName>
    <alternativeName>
        <fullName>Alpha-2U globulin-related protein</fullName>
    </alternativeName>
    <alternativeName>
        <fullName evidence="7">Lipocalin 24p3</fullName>
    </alternativeName>
    <alternativeName>
        <fullName>Lipocalin-2</fullName>
    </alternativeName>
    <alternativeName>
        <fullName>Siderocalin LCN2</fullName>
    </alternativeName>
    <alternativeName>
        <fullName>p25</fullName>
    </alternativeName>
</protein>
<comment type="function">
    <text evidence="2 3">Iron-trafficking protein involved in multiple processes such as apoptosis, innate immunity and renal development (By similarity). Binds iron through association with 2,3-dihydroxybenzoic acid (2,3-DHBA), a siderophore that shares structural similarities with bacterial enterobactin, and delivers or removes iron from the cell, depending on the context. Iron-bound form (holo-24p3) is internalized following binding to the SLC22A17 (24p3R) receptor, leading to release of iron and subsequent increase of intracellular iron concentration. In contrast, association of the iron-free form (apo-24p3) with the SLC22A17 (24p3R) receptor is followed by association with an intracellular siderophore, iron chelation and iron transfer to the extracellular medium, thereby reducing intracellular iron concentration. Involved in apoptosis due to interleukin-3 (IL3) deprivation: iron-loaded form increases intracellular iron concentration without promoting apoptosis, while iron-free form decreases intracellular iron levels, inducing expression of the proapoptotic protein BCL2L11/BIM, resulting in apoptosis (By similarity). Involved in innate immunity; limits bacterial proliferation by sequestering iron bound to microbial siderophores, such as enterobactin. Can also bind siderophores from M.tuberculosis (By similarity).</text>
</comment>
<comment type="subunit">
    <text evidence="3">Monomer. Homodimer; disulfide-linked. Heterodimer; disulfide-linked with MMP9.</text>
</comment>
<comment type="subcellular location">
    <subcellularLocation>
        <location evidence="3">Secreted</location>
    </subcellularLocation>
    <subcellularLocation>
        <location evidence="3">Cytoplasmic granule lumen</location>
    </subcellularLocation>
    <subcellularLocation>
        <location evidence="3">Cytoplasmic vesicle lumen</location>
    </subcellularLocation>
    <text evidence="2 3">Upon binding to the SLC22A17 (24p3R) receptor, it is internalized (By similarity). Releases the bound iron in the acidic lumen of cytoplasmic vesicles (By similarity).</text>
</comment>
<comment type="tissue specificity">
    <text evidence="5">Detected in the ureteric bud in embryonic kidney (at protein level).</text>
</comment>
<comment type="similarity">
    <text evidence="9">Belongs to the calycin superfamily. Lipocalin family.</text>
</comment>
<dbReference type="EMBL" id="X13295">
    <property type="protein sequence ID" value="CAA31657.1"/>
    <property type="molecule type" value="mRNA"/>
</dbReference>
<dbReference type="EMBL" id="BC089053">
    <property type="protein sequence ID" value="AAH89053.1"/>
    <property type="molecule type" value="mRNA"/>
</dbReference>
<dbReference type="PIR" id="S01989">
    <property type="entry name" value="S01989"/>
</dbReference>
<dbReference type="RefSeq" id="NP_570097.2">
    <property type="nucleotide sequence ID" value="NM_130741.2"/>
</dbReference>
<dbReference type="PDB" id="2K23">
    <property type="method" value="NMR"/>
    <property type="chains" value="A=21-198"/>
</dbReference>
<dbReference type="PDBsum" id="2K23"/>
<dbReference type="BMRB" id="P30152"/>
<dbReference type="SMR" id="P30152"/>
<dbReference type="FunCoup" id="P30152">
    <property type="interactions" value="65"/>
</dbReference>
<dbReference type="STRING" id="10116.ENSRNOP00000018776"/>
<dbReference type="GlyCosmos" id="P30152">
    <property type="glycosylation" value="1 site, No reported glycans"/>
</dbReference>
<dbReference type="GlyGen" id="P30152">
    <property type="glycosylation" value="1 site"/>
</dbReference>
<dbReference type="iPTMnet" id="P30152"/>
<dbReference type="PhosphoSitePlus" id="P30152"/>
<dbReference type="PaxDb" id="10116-ENSRNOP00000018776"/>
<dbReference type="Ensembl" id="ENSRNOT00000018776.6">
    <property type="protein sequence ID" value="ENSRNOP00000018776.3"/>
    <property type="gene ID" value="ENSRNOG00000013973.6"/>
</dbReference>
<dbReference type="GeneID" id="170496"/>
<dbReference type="KEGG" id="rno:170496"/>
<dbReference type="UCSC" id="RGD:69408">
    <property type="organism name" value="rat"/>
</dbReference>
<dbReference type="AGR" id="RGD:69408"/>
<dbReference type="CTD" id="3934"/>
<dbReference type="RGD" id="69408">
    <property type="gene designation" value="Lcn2"/>
</dbReference>
<dbReference type="eggNOG" id="ENOG502T7VZ">
    <property type="taxonomic scope" value="Eukaryota"/>
</dbReference>
<dbReference type="GeneTree" id="ENSGT01050000244868"/>
<dbReference type="HOGENOM" id="CLU_094061_2_0_1"/>
<dbReference type="InParanoid" id="P30152"/>
<dbReference type="OMA" id="IDKCIDD"/>
<dbReference type="OrthoDB" id="9048943at2759"/>
<dbReference type="PhylomeDB" id="P30152"/>
<dbReference type="TreeFam" id="TF336103"/>
<dbReference type="Reactome" id="R-RNO-6798695">
    <property type="pathway name" value="Neutrophil degranulation"/>
</dbReference>
<dbReference type="Reactome" id="R-RNO-6799990">
    <property type="pathway name" value="Metal sequestration by antimicrobial proteins"/>
</dbReference>
<dbReference type="Reactome" id="R-RNO-917937">
    <property type="pathway name" value="Iron uptake and transport"/>
</dbReference>
<dbReference type="EvolutionaryTrace" id="P30152"/>
<dbReference type="PRO" id="PR:P30152"/>
<dbReference type="Proteomes" id="UP000002494">
    <property type="component" value="Chromosome 3"/>
</dbReference>
<dbReference type="Bgee" id="ENSRNOG00000013973">
    <property type="expression patterns" value="Expressed in ovary and 19 other cell types or tissues"/>
</dbReference>
<dbReference type="GO" id="GO:0060205">
    <property type="term" value="C:cytoplasmic vesicle lumen"/>
    <property type="evidence" value="ECO:0007669"/>
    <property type="project" value="UniProtKB-SubCell"/>
</dbReference>
<dbReference type="GO" id="GO:0005576">
    <property type="term" value="C:extracellular region"/>
    <property type="evidence" value="ECO:0000250"/>
    <property type="project" value="UniProtKB"/>
</dbReference>
<dbReference type="GO" id="GO:0005615">
    <property type="term" value="C:extracellular space"/>
    <property type="evidence" value="ECO:0000314"/>
    <property type="project" value="RGD"/>
</dbReference>
<dbReference type="GO" id="GO:1903981">
    <property type="term" value="F:enterobactin binding"/>
    <property type="evidence" value="ECO:0000353"/>
    <property type="project" value="RGD"/>
</dbReference>
<dbReference type="GO" id="GO:0042802">
    <property type="term" value="F:identical protein binding"/>
    <property type="evidence" value="ECO:0000353"/>
    <property type="project" value="RGD"/>
</dbReference>
<dbReference type="GO" id="GO:0005506">
    <property type="term" value="F:iron ion binding"/>
    <property type="evidence" value="ECO:0000250"/>
    <property type="project" value="UniProtKB"/>
</dbReference>
<dbReference type="GO" id="GO:0140315">
    <property type="term" value="F:iron ion sequestering activity"/>
    <property type="evidence" value="ECO:0000250"/>
    <property type="project" value="UniProtKB"/>
</dbReference>
<dbReference type="GO" id="GO:0002020">
    <property type="term" value="F:protease binding"/>
    <property type="evidence" value="ECO:0000353"/>
    <property type="project" value="RGD"/>
</dbReference>
<dbReference type="GO" id="GO:0006953">
    <property type="term" value="P:acute-phase response"/>
    <property type="evidence" value="ECO:0000270"/>
    <property type="project" value="RGD"/>
</dbReference>
<dbReference type="GO" id="GO:1904646">
    <property type="term" value="P:cellular response to amyloid-beta"/>
    <property type="evidence" value="ECO:0000270"/>
    <property type="project" value="RGD"/>
</dbReference>
<dbReference type="GO" id="GO:0070301">
    <property type="term" value="P:cellular response to hydrogen peroxide"/>
    <property type="evidence" value="ECO:0000314"/>
    <property type="project" value="RGD"/>
</dbReference>
<dbReference type="GO" id="GO:0071456">
    <property type="term" value="P:cellular response to hypoxia"/>
    <property type="evidence" value="ECO:0000270"/>
    <property type="project" value="RGD"/>
</dbReference>
<dbReference type="GO" id="GO:0036295">
    <property type="term" value="P:cellular response to increased oxygen levels"/>
    <property type="evidence" value="ECO:0000270"/>
    <property type="project" value="RGD"/>
</dbReference>
<dbReference type="GO" id="GO:0071347">
    <property type="term" value="P:cellular response to interleukin-1"/>
    <property type="evidence" value="ECO:0000270"/>
    <property type="project" value="RGD"/>
</dbReference>
<dbReference type="GO" id="GO:0071354">
    <property type="term" value="P:cellular response to interleukin-6"/>
    <property type="evidence" value="ECO:0000270"/>
    <property type="project" value="RGD"/>
</dbReference>
<dbReference type="GO" id="GO:0071222">
    <property type="term" value="P:cellular response to lipopolysaccharide"/>
    <property type="evidence" value="ECO:0000270"/>
    <property type="project" value="RGD"/>
</dbReference>
<dbReference type="GO" id="GO:1990090">
    <property type="term" value="P:cellular response to nerve growth factor stimulus"/>
    <property type="evidence" value="ECO:0000270"/>
    <property type="project" value="RGD"/>
</dbReference>
<dbReference type="GO" id="GO:0031669">
    <property type="term" value="P:cellular response to nutrient levels"/>
    <property type="evidence" value="ECO:0000270"/>
    <property type="project" value="RGD"/>
</dbReference>
<dbReference type="GO" id="GO:0071356">
    <property type="term" value="P:cellular response to tumor necrosis factor"/>
    <property type="evidence" value="ECO:0000270"/>
    <property type="project" value="RGD"/>
</dbReference>
<dbReference type="GO" id="GO:0071481">
    <property type="term" value="P:cellular response to X-ray"/>
    <property type="evidence" value="ECO:0000270"/>
    <property type="project" value="RGD"/>
</dbReference>
<dbReference type="GO" id="GO:0042742">
    <property type="term" value="P:defense response to bacterium"/>
    <property type="evidence" value="ECO:0000250"/>
    <property type="project" value="UniProtKB"/>
</dbReference>
<dbReference type="GO" id="GO:0097192">
    <property type="term" value="P:extrinsic apoptotic signaling pathway in absence of ligand"/>
    <property type="evidence" value="ECO:0000266"/>
    <property type="project" value="RGD"/>
</dbReference>
<dbReference type="GO" id="GO:0045087">
    <property type="term" value="P:innate immune response"/>
    <property type="evidence" value="ECO:0000250"/>
    <property type="project" value="UniProtKB"/>
</dbReference>
<dbReference type="GO" id="GO:0007616">
    <property type="term" value="P:long-term memory"/>
    <property type="evidence" value="ECO:0000315"/>
    <property type="project" value="RGD"/>
</dbReference>
<dbReference type="GO" id="GO:0110091">
    <property type="term" value="P:negative regulation of hippocampal neuron apoptotic process"/>
    <property type="evidence" value="ECO:0000315"/>
    <property type="project" value="RGD"/>
</dbReference>
<dbReference type="GO" id="GO:0043065">
    <property type="term" value="P:positive regulation of apoptotic process"/>
    <property type="evidence" value="ECO:0000316"/>
    <property type="project" value="RGD"/>
</dbReference>
<dbReference type="GO" id="GO:0031346">
    <property type="term" value="P:positive regulation of cell projection organization"/>
    <property type="evidence" value="ECO:0000314"/>
    <property type="project" value="RGD"/>
</dbReference>
<dbReference type="GO" id="GO:0120162">
    <property type="term" value="P:positive regulation of cold-induced thermogenesis"/>
    <property type="evidence" value="ECO:0000250"/>
    <property type="project" value="YuBioLab"/>
</dbReference>
<dbReference type="GO" id="GO:0010595">
    <property type="term" value="P:positive regulation of endothelial cell migration"/>
    <property type="evidence" value="ECO:0000314"/>
    <property type="project" value="RGD"/>
</dbReference>
<dbReference type="GO" id="GO:1905956">
    <property type="term" value="P:positive regulation of endothelial tube morphogenesis"/>
    <property type="evidence" value="ECO:0000314"/>
    <property type="project" value="RGD"/>
</dbReference>
<dbReference type="GO" id="GO:0010628">
    <property type="term" value="P:positive regulation of gene expression"/>
    <property type="evidence" value="ECO:0000314"/>
    <property type="project" value="RGD"/>
</dbReference>
<dbReference type="GO" id="GO:0110090">
    <property type="term" value="P:positive regulation of hippocampal neuron apoptotic process"/>
    <property type="evidence" value="ECO:0000314"/>
    <property type="project" value="RGD"/>
</dbReference>
<dbReference type="GO" id="GO:1904440">
    <property type="term" value="P:positive regulation of iron ion import across plasma membrane"/>
    <property type="evidence" value="ECO:0000314"/>
    <property type="project" value="RGD"/>
</dbReference>
<dbReference type="GO" id="GO:0043525">
    <property type="term" value="P:positive regulation of neuron apoptotic process"/>
    <property type="evidence" value="ECO:0000315"/>
    <property type="project" value="RGD"/>
</dbReference>
<dbReference type="GO" id="GO:1903428">
    <property type="term" value="P:positive regulation of reactive oxygen species biosynthetic process"/>
    <property type="evidence" value="ECO:0000314"/>
    <property type="project" value="RGD"/>
</dbReference>
<dbReference type="GO" id="GO:2000379">
    <property type="term" value="P:positive regulation of reactive oxygen species metabolic process"/>
    <property type="evidence" value="ECO:0000315"/>
    <property type="project" value="RGD"/>
</dbReference>
<dbReference type="GO" id="GO:0009617">
    <property type="term" value="P:response to bacterium"/>
    <property type="evidence" value="ECO:0000270"/>
    <property type="project" value="RGD"/>
</dbReference>
<dbReference type="GO" id="GO:0009637">
    <property type="term" value="P:response to blue light"/>
    <property type="evidence" value="ECO:0000270"/>
    <property type="project" value="RGD"/>
</dbReference>
<dbReference type="GO" id="GO:0009750">
    <property type="term" value="P:response to fructose"/>
    <property type="evidence" value="ECO:0000270"/>
    <property type="project" value="RGD"/>
</dbReference>
<dbReference type="GO" id="GO:0009635">
    <property type="term" value="P:response to herbicide"/>
    <property type="evidence" value="ECO:0000314"/>
    <property type="project" value="RGD"/>
</dbReference>
<dbReference type="GO" id="GO:0010040">
    <property type="term" value="P:response to iron(II) ion"/>
    <property type="evidence" value="ECO:0000270"/>
    <property type="project" value="RGD"/>
</dbReference>
<dbReference type="GO" id="GO:1904373">
    <property type="term" value="P:response to kainic acid"/>
    <property type="evidence" value="ECO:0000270"/>
    <property type="project" value="RGD"/>
</dbReference>
<dbReference type="GO" id="GO:0032496">
    <property type="term" value="P:response to lipopolysaccharide"/>
    <property type="evidence" value="ECO:0000270"/>
    <property type="project" value="RGD"/>
</dbReference>
<dbReference type="GO" id="GO:0010046">
    <property type="term" value="P:response to mycotoxin"/>
    <property type="evidence" value="ECO:0000270"/>
    <property type="project" value="RGD"/>
</dbReference>
<dbReference type="GO" id="GO:0031667">
    <property type="term" value="P:response to nutrient levels"/>
    <property type="evidence" value="ECO:0000270"/>
    <property type="project" value="RGD"/>
</dbReference>
<dbReference type="GO" id="GO:0006979">
    <property type="term" value="P:response to oxidative stress"/>
    <property type="evidence" value="ECO:0000270"/>
    <property type="project" value="RGD"/>
</dbReference>
<dbReference type="GO" id="GO:0009636">
    <property type="term" value="P:response to toxic substance"/>
    <property type="evidence" value="ECO:0000270"/>
    <property type="project" value="RGD"/>
</dbReference>
<dbReference type="GO" id="GO:0009615">
    <property type="term" value="P:response to virus"/>
    <property type="evidence" value="ECO:0000266"/>
    <property type="project" value="RGD"/>
</dbReference>
<dbReference type="GO" id="GO:0009410">
    <property type="term" value="P:response to xenobiotic stimulus"/>
    <property type="evidence" value="ECO:0000315"/>
    <property type="project" value="RGD"/>
</dbReference>
<dbReference type="GO" id="GO:0007614">
    <property type="term" value="P:short-term memory"/>
    <property type="evidence" value="ECO:0000315"/>
    <property type="project" value="RGD"/>
</dbReference>
<dbReference type="GO" id="GO:0015891">
    <property type="term" value="P:siderophore transport"/>
    <property type="evidence" value="ECO:0000250"/>
    <property type="project" value="UniProtKB"/>
</dbReference>
<dbReference type="CDD" id="cd19457">
    <property type="entry name" value="lipocalin_2-like"/>
    <property type="match status" value="1"/>
</dbReference>
<dbReference type="Gene3D" id="2.40.128.20">
    <property type="match status" value="1"/>
</dbReference>
<dbReference type="InterPro" id="IPR012674">
    <property type="entry name" value="Calycin"/>
</dbReference>
<dbReference type="InterPro" id="IPR003087">
    <property type="entry name" value="LCN2/LCN12"/>
</dbReference>
<dbReference type="InterPro" id="IPR002345">
    <property type="entry name" value="Lipocalin"/>
</dbReference>
<dbReference type="InterPro" id="IPR000566">
    <property type="entry name" value="Lipocln_cytosolic_FA-bd_dom"/>
</dbReference>
<dbReference type="PANTHER" id="PTHR11430">
    <property type="entry name" value="LIPOCALIN"/>
    <property type="match status" value="1"/>
</dbReference>
<dbReference type="PANTHER" id="PTHR11430:SF13">
    <property type="entry name" value="NEUTROPHIL GELATINASE-ASSOCIATED LIPOCALIN"/>
    <property type="match status" value="1"/>
</dbReference>
<dbReference type="Pfam" id="PF00061">
    <property type="entry name" value="Lipocalin"/>
    <property type="match status" value="1"/>
</dbReference>
<dbReference type="PRINTS" id="PR00179">
    <property type="entry name" value="LIPOCALIN"/>
</dbReference>
<dbReference type="PRINTS" id="PR01275">
    <property type="entry name" value="NGELATINASE"/>
</dbReference>
<dbReference type="SUPFAM" id="SSF50814">
    <property type="entry name" value="Lipocalins"/>
    <property type="match status" value="1"/>
</dbReference>
<feature type="signal peptide" evidence="1">
    <location>
        <begin position="1"/>
        <end position="20"/>
    </location>
</feature>
<feature type="chain" id="PRO_0000017935" description="Neutrophil gelatinase-associated lipocalin">
    <location>
        <begin position="21"/>
        <end position="198"/>
    </location>
</feature>
<feature type="binding site" evidence="3">
    <location>
        <begin position="72"/>
        <end position="74"/>
    </location>
    <ligand>
        <name>a carboxymycobactin</name>
        <dbReference type="ChEBI" id="CHEBI:178051"/>
    </ligand>
</feature>
<feature type="binding site" evidence="3">
    <location>
        <position position="126"/>
    </location>
    <ligand>
        <name>enterobactin</name>
        <dbReference type="ChEBI" id="CHEBI:77805"/>
    </ligand>
</feature>
<feature type="binding site" evidence="3">
    <location>
        <position position="145"/>
    </location>
    <ligand>
        <name>a carboxymycobactin</name>
        <dbReference type="ChEBI" id="CHEBI:178051"/>
    </ligand>
</feature>
<feature type="binding site" evidence="3">
    <location>
        <position position="154"/>
    </location>
    <ligand>
        <name>a carboxymycobactin</name>
        <dbReference type="ChEBI" id="CHEBI:178051"/>
    </ligand>
</feature>
<feature type="binding site" evidence="3">
    <location>
        <position position="154"/>
    </location>
    <ligand>
        <name>enterobactin</name>
        <dbReference type="ChEBI" id="CHEBI:77805"/>
    </ligand>
</feature>
<feature type="binding site" evidence="3">
    <location>
        <position position="158"/>
    </location>
    <ligand>
        <name>a carboxymycobactin</name>
        <dbReference type="ChEBI" id="CHEBI:178051"/>
    </ligand>
</feature>
<feature type="modified residue" description="Pyrrolidone carboxylic acid" evidence="3">
    <location>
        <position position="21"/>
    </location>
</feature>
<feature type="glycosylation site" description="N-linked (GlcNAc...) asparagine" evidence="4">
    <location>
        <position position="85"/>
    </location>
</feature>
<feature type="disulfide bond" evidence="6">
    <location>
        <begin position="96"/>
        <end position="195"/>
    </location>
</feature>
<feature type="sequence conflict" description="In Ref. 1; CAA31657." evidence="9" ref="1">
    <original>S</original>
    <variation>R</variation>
    <location>
        <position position="18"/>
    </location>
</feature>
<feature type="sequence conflict" description="In Ref. 1; CAA31657." evidence="9" ref="1">
    <original>G</original>
    <variation>A</variation>
    <location>
        <position position="58"/>
    </location>
</feature>
<feature type="helix" evidence="10">
    <location>
        <begin position="33"/>
        <end position="35"/>
    </location>
</feature>
<feature type="helix" evidence="10">
    <location>
        <begin position="44"/>
        <end position="47"/>
    </location>
</feature>
<feature type="strand" evidence="10">
    <location>
        <begin position="49"/>
        <end position="58"/>
    </location>
</feature>
<feature type="strand" evidence="10">
    <location>
        <begin position="64"/>
        <end position="66"/>
    </location>
</feature>
<feature type="strand" evidence="10">
    <location>
        <begin position="73"/>
        <end position="78"/>
    </location>
</feature>
<feature type="strand" evidence="10">
    <location>
        <begin position="84"/>
        <end position="90"/>
    </location>
</feature>
<feature type="strand" evidence="10">
    <location>
        <begin position="97"/>
        <end position="105"/>
    </location>
</feature>
<feature type="strand" evidence="10">
    <location>
        <begin position="111"/>
        <end position="114"/>
    </location>
</feature>
<feature type="helix" evidence="10">
    <location>
        <begin position="117"/>
        <end position="119"/>
    </location>
</feature>
<feature type="strand" evidence="10">
    <location>
        <begin position="121"/>
        <end position="132"/>
    </location>
</feature>
<feature type="strand" evidence="10">
    <location>
        <begin position="135"/>
        <end position="137"/>
    </location>
</feature>
<feature type="strand" evidence="10">
    <location>
        <begin position="139"/>
        <end position="147"/>
    </location>
</feature>
<feature type="strand" evidence="10">
    <location>
        <begin position="150"/>
        <end position="162"/>
    </location>
</feature>
<feature type="helix" evidence="10">
    <location>
        <begin position="166"/>
        <end position="178"/>
    </location>
</feature>
<feature type="helix" evidence="10">
    <location>
        <begin position="183"/>
        <end position="185"/>
    </location>
</feature>
<feature type="strand" evidence="10">
    <location>
        <begin position="193"/>
        <end position="195"/>
    </location>
</feature>
<keyword id="KW-0002">3D-structure</keyword>
<keyword id="KW-0053">Apoptosis</keyword>
<keyword id="KW-0968">Cytoplasmic vesicle</keyword>
<keyword id="KW-1015">Disulfide bond</keyword>
<keyword id="KW-0325">Glycoprotein</keyword>
<keyword id="KW-0391">Immunity</keyword>
<keyword id="KW-0399">Innate immunity</keyword>
<keyword id="KW-0406">Ion transport</keyword>
<keyword id="KW-0408">Iron</keyword>
<keyword id="KW-0410">Iron transport</keyword>
<keyword id="KW-0873">Pyrrolidone carboxylic acid</keyword>
<keyword id="KW-1185">Reference proteome</keyword>
<keyword id="KW-0964">Secreted</keyword>
<keyword id="KW-0732">Signal</keyword>
<keyword id="KW-0813">Transport</keyword>
<evidence type="ECO:0000250" key="1"/>
<evidence type="ECO:0000250" key="2">
    <source>
        <dbReference type="UniProtKB" id="P11672"/>
    </source>
</evidence>
<evidence type="ECO:0000250" key="3">
    <source>
        <dbReference type="UniProtKB" id="P80188"/>
    </source>
</evidence>
<evidence type="ECO:0000255" key="4"/>
<evidence type="ECO:0000269" key="5">
    <source>
    </source>
</evidence>
<evidence type="ECO:0000269" key="6">
    <source>
    </source>
</evidence>
<evidence type="ECO:0000303" key="7">
    <source>
    </source>
</evidence>
<evidence type="ECO:0000303" key="8">
    <source>
    </source>
</evidence>
<evidence type="ECO:0000305" key="9"/>
<evidence type="ECO:0007829" key="10">
    <source>
        <dbReference type="PDB" id="2K23"/>
    </source>
</evidence>
<name>NGAL_RAT</name>
<organism>
    <name type="scientific">Rattus norvegicus</name>
    <name type="common">Rat</name>
    <dbReference type="NCBI Taxonomy" id="10116"/>
    <lineage>
        <taxon>Eukaryota</taxon>
        <taxon>Metazoa</taxon>
        <taxon>Chordata</taxon>
        <taxon>Craniata</taxon>
        <taxon>Vertebrata</taxon>
        <taxon>Euteleostomi</taxon>
        <taxon>Mammalia</taxon>
        <taxon>Eutheria</taxon>
        <taxon>Euarchontoglires</taxon>
        <taxon>Glires</taxon>
        <taxon>Rodentia</taxon>
        <taxon>Myomorpha</taxon>
        <taxon>Muroidea</taxon>
        <taxon>Muridae</taxon>
        <taxon>Murinae</taxon>
        <taxon>Rattus</taxon>
    </lineage>
</organism>
<sequence length="198" mass="22476">MGLGVLCLALVLLGVLQSQAQDSTQNLIPAPPLISVPLQPGFWTERFQGRWFVVGLAGNAVQKERQSRFTMYSTIYELQEDNSYNVTSILVRGQGCRYWIRTFVPSSRPGQFTLGNIHSYPQIQSYDVQVADTDYDQFAMVFFQKTSENKQYFKVTLYGRTKGLSDELKERFVSFAKSLGLKDNNIVFSVPTDQCIDN</sequence>
<reference key="1">
    <citation type="journal article" date="1988" name="Nucleic Acids Res.">
        <title>The primary structure of rat alpha 2 mu globulin-related protein.</title>
        <authorList>
            <person name="Chan Y.-L."/>
            <person name="Paz V."/>
            <person name="Wool I.G."/>
        </authorList>
    </citation>
    <scope>NUCLEOTIDE SEQUENCE [MRNA]</scope>
</reference>
<reference key="2">
    <citation type="journal article" date="2004" name="Genome Res.">
        <title>The status, quality, and expansion of the NIH full-length cDNA project: the Mammalian Gene Collection (MGC).</title>
        <authorList>
            <consortium name="The MGC Project Team"/>
        </authorList>
    </citation>
    <scope>NUCLEOTIDE SEQUENCE [LARGE SCALE MRNA]</scope>
    <source>
        <tissue>Ovary</tissue>
    </source>
</reference>
<reference key="3">
    <citation type="journal article" date="2002" name="Mol. Cell">
        <title>An iron delivery pathway mediated by a lipocalin.</title>
        <authorList>
            <person name="Yang J."/>
            <person name="Goetz D."/>
            <person name="Li J.Y."/>
            <person name="Wang W."/>
            <person name="Mori K."/>
            <person name="Setlik D."/>
            <person name="Du T."/>
            <person name="Erdjument-Bromage H."/>
            <person name="Tempst P."/>
            <person name="Strong R."/>
            <person name="Barasch J."/>
        </authorList>
    </citation>
    <scope>TISSUE SPECIFICITY</scope>
</reference>
<reference key="4">
    <citation type="journal article" date="2011" name="Proteins">
        <title>Solution structure of the protein lipocalin 12 from rat epididymis.</title>
        <authorList>
            <person name="Peng Y."/>
            <person name="Zhang X."/>
            <person name="Liu J."/>
            <person name="Liu Q."/>
            <person name="Guo C."/>
            <person name="Zhang Y."/>
            <person name="Lin D."/>
        </authorList>
    </citation>
    <scope>STRUCTURE BY NMR OF 21-198</scope>
    <scope>DISULFIDE BOND</scope>
</reference>
<accession>P30152</accession>
<accession>Q5HZF1</accession>
<gene>
    <name type="primary">Lcn2</name>
</gene>